<sequence length="232" mass="25848">MKSLNDAISKIIDYKFTNYAILEEALTHPSVNKRNSKNQIVSYERLEFLGDSVLNMVVSATLFKLFPEEKEGALAKRKTDLVCGNTIANVAKEIKLGSFIIMNNSERCNGGRCNLKNLENSLEALIGAIYIDGGLENVEKFIIQYWEKLAKGMLDPPQDPKTSLQEWTQKNKLPLPEYELVKQTGPAHNPEFTISVCIEDYGKVSACASSKKIAEQKAAELMLEKIGKDASV</sequence>
<accession>Q73FT3</accession>
<protein>
    <recommendedName>
        <fullName evidence="1">Ribonuclease 3</fullName>
        <ecNumber evidence="1">3.1.26.3</ecNumber>
    </recommendedName>
    <alternativeName>
        <fullName evidence="1">Ribonuclease III</fullName>
        <shortName evidence="1">RNase III</shortName>
    </alternativeName>
</protein>
<keyword id="KW-0963">Cytoplasm</keyword>
<keyword id="KW-0255">Endonuclease</keyword>
<keyword id="KW-0378">Hydrolase</keyword>
<keyword id="KW-0460">Magnesium</keyword>
<keyword id="KW-0479">Metal-binding</keyword>
<keyword id="KW-0507">mRNA processing</keyword>
<keyword id="KW-0540">Nuclease</keyword>
<keyword id="KW-0694">RNA-binding</keyword>
<keyword id="KW-0698">rRNA processing</keyword>
<keyword id="KW-0699">rRNA-binding</keyword>
<keyword id="KW-0819">tRNA processing</keyword>
<comment type="function">
    <text evidence="1">Digests double-stranded RNA. Involved in the processing of primary rRNA transcript to yield the immediate precursors to the large and small rRNAs (23S and 16S). Processes some mRNAs, and tRNAs when they are encoded in the rRNA operon. Processes pre-crRNA and tracrRNA of type II CRISPR loci if present in the organism.</text>
</comment>
<comment type="catalytic activity">
    <reaction evidence="1">
        <text>Endonucleolytic cleavage to 5'-phosphomonoester.</text>
        <dbReference type="EC" id="3.1.26.3"/>
    </reaction>
</comment>
<comment type="cofactor">
    <cofactor evidence="1">
        <name>Mg(2+)</name>
        <dbReference type="ChEBI" id="CHEBI:18420"/>
    </cofactor>
</comment>
<comment type="subunit">
    <text evidence="1">Homodimer.</text>
</comment>
<comment type="subcellular location">
    <subcellularLocation>
        <location evidence="1">Cytoplasm</location>
    </subcellularLocation>
</comment>
<comment type="similarity">
    <text evidence="1">Belongs to the ribonuclease III family.</text>
</comment>
<evidence type="ECO:0000255" key="1">
    <source>
        <dbReference type="HAMAP-Rule" id="MF_00104"/>
    </source>
</evidence>
<gene>
    <name evidence="1" type="primary">rnc</name>
    <name type="ordered locus">WD_1240</name>
</gene>
<reference key="1">
    <citation type="journal article" date="2004" name="PLoS Biol.">
        <title>Phylogenomics of the reproductive parasite Wolbachia pipientis wMel: a streamlined genome overrun by mobile genetic elements.</title>
        <authorList>
            <person name="Wu M."/>
            <person name="Sun L.V."/>
            <person name="Vamathevan J.J."/>
            <person name="Riegler M."/>
            <person name="DeBoy R.T."/>
            <person name="Brownlie J.C."/>
            <person name="McGraw E.A."/>
            <person name="Martin W."/>
            <person name="Esser C."/>
            <person name="Ahmadinejad N."/>
            <person name="Wiegand C."/>
            <person name="Madupu R."/>
            <person name="Beanan M.J."/>
            <person name="Brinkac L.M."/>
            <person name="Daugherty S.C."/>
            <person name="Durkin A.S."/>
            <person name="Kolonay J.F."/>
            <person name="Nelson W.C."/>
            <person name="Mohamoud Y."/>
            <person name="Lee P."/>
            <person name="Berry K.J."/>
            <person name="Young M.B."/>
            <person name="Utterback T.R."/>
            <person name="Weidman J.F."/>
            <person name="Nierman W.C."/>
            <person name="Paulsen I.T."/>
            <person name="Nelson K.E."/>
            <person name="Tettelin H."/>
            <person name="O'Neill S.L."/>
            <person name="Eisen J.A."/>
        </authorList>
    </citation>
    <scope>NUCLEOTIDE SEQUENCE [LARGE SCALE GENOMIC DNA]</scope>
</reference>
<organism>
    <name type="scientific">Wolbachia pipientis wMel</name>
    <dbReference type="NCBI Taxonomy" id="163164"/>
    <lineage>
        <taxon>Bacteria</taxon>
        <taxon>Pseudomonadati</taxon>
        <taxon>Pseudomonadota</taxon>
        <taxon>Alphaproteobacteria</taxon>
        <taxon>Rickettsiales</taxon>
        <taxon>Anaplasmataceae</taxon>
        <taxon>Wolbachieae</taxon>
        <taxon>Wolbachia</taxon>
    </lineage>
</organism>
<feature type="chain" id="PRO_0000228602" description="Ribonuclease 3">
    <location>
        <begin position="1"/>
        <end position="232"/>
    </location>
</feature>
<feature type="domain" description="RNase III" evidence="1">
    <location>
        <begin position="5"/>
        <end position="134"/>
    </location>
</feature>
<feature type="domain" description="DRBM" evidence="1">
    <location>
        <begin position="159"/>
        <end position="228"/>
    </location>
</feature>
<feature type="active site" evidence="1">
    <location>
        <position position="51"/>
    </location>
</feature>
<feature type="active site" evidence="1">
    <location>
        <position position="123"/>
    </location>
</feature>
<feature type="binding site" evidence="1">
    <location>
        <position position="47"/>
    </location>
    <ligand>
        <name>Mg(2+)</name>
        <dbReference type="ChEBI" id="CHEBI:18420"/>
    </ligand>
</feature>
<feature type="binding site" evidence="1">
    <location>
        <position position="120"/>
    </location>
    <ligand>
        <name>Mg(2+)</name>
        <dbReference type="ChEBI" id="CHEBI:18420"/>
    </ligand>
</feature>
<feature type="binding site" evidence="1">
    <location>
        <position position="123"/>
    </location>
    <ligand>
        <name>Mg(2+)</name>
        <dbReference type="ChEBI" id="CHEBI:18420"/>
    </ligand>
</feature>
<dbReference type="EC" id="3.1.26.3" evidence="1"/>
<dbReference type="EMBL" id="AE017196">
    <property type="protein sequence ID" value="AAS14886.1"/>
    <property type="molecule type" value="Genomic_DNA"/>
</dbReference>
<dbReference type="RefSeq" id="WP_006279914.1">
    <property type="nucleotide sequence ID" value="NZ_OX384529.1"/>
</dbReference>
<dbReference type="SMR" id="Q73FT3"/>
<dbReference type="EnsemblBacteria" id="AAS14886">
    <property type="protein sequence ID" value="AAS14886"/>
    <property type="gene ID" value="WD_1240"/>
</dbReference>
<dbReference type="GeneID" id="70036709"/>
<dbReference type="KEGG" id="wol:WD_1240"/>
<dbReference type="eggNOG" id="COG0571">
    <property type="taxonomic scope" value="Bacteria"/>
</dbReference>
<dbReference type="Proteomes" id="UP000008215">
    <property type="component" value="Chromosome"/>
</dbReference>
<dbReference type="GO" id="GO:0005737">
    <property type="term" value="C:cytoplasm"/>
    <property type="evidence" value="ECO:0007669"/>
    <property type="project" value="UniProtKB-SubCell"/>
</dbReference>
<dbReference type="GO" id="GO:0003725">
    <property type="term" value="F:double-stranded RNA binding"/>
    <property type="evidence" value="ECO:0007669"/>
    <property type="project" value="TreeGrafter"/>
</dbReference>
<dbReference type="GO" id="GO:0046872">
    <property type="term" value="F:metal ion binding"/>
    <property type="evidence" value="ECO:0007669"/>
    <property type="project" value="UniProtKB-KW"/>
</dbReference>
<dbReference type="GO" id="GO:0004525">
    <property type="term" value="F:ribonuclease III activity"/>
    <property type="evidence" value="ECO:0007669"/>
    <property type="project" value="UniProtKB-UniRule"/>
</dbReference>
<dbReference type="GO" id="GO:0019843">
    <property type="term" value="F:rRNA binding"/>
    <property type="evidence" value="ECO:0007669"/>
    <property type="project" value="UniProtKB-KW"/>
</dbReference>
<dbReference type="GO" id="GO:0006397">
    <property type="term" value="P:mRNA processing"/>
    <property type="evidence" value="ECO:0007669"/>
    <property type="project" value="UniProtKB-UniRule"/>
</dbReference>
<dbReference type="GO" id="GO:0010468">
    <property type="term" value="P:regulation of gene expression"/>
    <property type="evidence" value="ECO:0007669"/>
    <property type="project" value="TreeGrafter"/>
</dbReference>
<dbReference type="GO" id="GO:0006364">
    <property type="term" value="P:rRNA processing"/>
    <property type="evidence" value="ECO:0007669"/>
    <property type="project" value="UniProtKB-UniRule"/>
</dbReference>
<dbReference type="GO" id="GO:0008033">
    <property type="term" value="P:tRNA processing"/>
    <property type="evidence" value="ECO:0007669"/>
    <property type="project" value="UniProtKB-KW"/>
</dbReference>
<dbReference type="CDD" id="cd10845">
    <property type="entry name" value="DSRM_RNAse_III_family"/>
    <property type="match status" value="1"/>
</dbReference>
<dbReference type="CDD" id="cd00593">
    <property type="entry name" value="RIBOc"/>
    <property type="match status" value="1"/>
</dbReference>
<dbReference type="FunFam" id="1.10.1520.10:FF:000001">
    <property type="entry name" value="Ribonuclease 3"/>
    <property type="match status" value="1"/>
</dbReference>
<dbReference type="FunFam" id="3.30.160.20:FF:000003">
    <property type="entry name" value="Ribonuclease 3"/>
    <property type="match status" value="1"/>
</dbReference>
<dbReference type="Gene3D" id="3.30.160.20">
    <property type="match status" value="1"/>
</dbReference>
<dbReference type="Gene3D" id="1.10.1520.10">
    <property type="entry name" value="Ribonuclease III domain"/>
    <property type="match status" value="1"/>
</dbReference>
<dbReference type="HAMAP" id="MF_00104">
    <property type="entry name" value="RNase_III"/>
    <property type="match status" value="1"/>
</dbReference>
<dbReference type="InterPro" id="IPR014720">
    <property type="entry name" value="dsRBD_dom"/>
</dbReference>
<dbReference type="InterPro" id="IPR011907">
    <property type="entry name" value="RNase_III"/>
</dbReference>
<dbReference type="InterPro" id="IPR000999">
    <property type="entry name" value="RNase_III_dom"/>
</dbReference>
<dbReference type="InterPro" id="IPR036389">
    <property type="entry name" value="RNase_III_sf"/>
</dbReference>
<dbReference type="NCBIfam" id="TIGR02191">
    <property type="entry name" value="RNaseIII"/>
    <property type="match status" value="1"/>
</dbReference>
<dbReference type="PANTHER" id="PTHR11207:SF0">
    <property type="entry name" value="RIBONUCLEASE 3"/>
    <property type="match status" value="1"/>
</dbReference>
<dbReference type="PANTHER" id="PTHR11207">
    <property type="entry name" value="RIBONUCLEASE III"/>
    <property type="match status" value="1"/>
</dbReference>
<dbReference type="Pfam" id="PF00035">
    <property type="entry name" value="dsrm"/>
    <property type="match status" value="1"/>
</dbReference>
<dbReference type="Pfam" id="PF14622">
    <property type="entry name" value="Ribonucleas_3_3"/>
    <property type="match status" value="1"/>
</dbReference>
<dbReference type="SMART" id="SM00358">
    <property type="entry name" value="DSRM"/>
    <property type="match status" value="1"/>
</dbReference>
<dbReference type="SMART" id="SM00535">
    <property type="entry name" value="RIBOc"/>
    <property type="match status" value="1"/>
</dbReference>
<dbReference type="SUPFAM" id="SSF54768">
    <property type="entry name" value="dsRNA-binding domain-like"/>
    <property type="match status" value="1"/>
</dbReference>
<dbReference type="SUPFAM" id="SSF69065">
    <property type="entry name" value="RNase III domain-like"/>
    <property type="match status" value="1"/>
</dbReference>
<dbReference type="PROSITE" id="PS50137">
    <property type="entry name" value="DS_RBD"/>
    <property type="match status" value="1"/>
</dbReference>
<dbReference type="PROSITE" id="PS00517">
    <property type="entry name" value="RNASE_3_1"/>
    <property type="match status" value="1"/>
</dbReference>
<dbReference type="PROSITE" id="PS50142">
    <property type="entry name" value="RNASE_3_2"/>
    <property type="match status" value="1"/>
</dbReference>
<name>RNC_WOLPM</name>
<proteinExistence type="inferred from homology"/>